<feature type="chain" id="PRO_1000199902" description="Urocanate hydratase">
    <location>
        <begin position="1"/>
        <end position="561"/>
    </location>
</feature>
<feature type="active site" evidence="1">
    <location>
        <position position="410"/>
    </location>
</feature>
<feature type="binding site" evidence="1">
    <location>
        <begin position="52"/>
        <end position="53"/>
    </location>
    <ligand>
        <name>NAD(+)</name>
        <dbReference type="ChEBI" id="CHEBI:57540"/>
    </ligand>
</feature>
<feature type="binding site" evidence="1">
    <location>
        <position position="130"/>
    </location>
    <ligand>
        <name>NAD(+)</name>
        <dbReference type="ChEBI" id="CHEBI:57540"/>
    </ligand>
</feature>
<feature type="binding site" evidence="1">
    <location>
        <begin position="176"/>
        <end position="178"/>
    </location>
    <ligand>
        <name>NAD(+)</name>
        <dbReference type="ChEBI" id="CHEBI:57540"/>
    </ligand>
</feature>
<feature type="binding site" evidence="1">
    <location>
        <position position="196"/>
    </location>
    <ligand>
        <name>NAD(+)</name>
        <dbReference type="ChEBI" id="CHEBI:57540"/>
    </ligand>
</feature>
<feature type="binding site" evidence="1">
    <location>
        <position position="201"/>
    </location>
    <ligand>
        <name>NAD(+)</name>
        <dbReference type="ChEBI" id="CHEBI:57540"/>
    </ligand>
</feature>
<feature type="binding site" evidence="1">
    <location>
        <begin position="242"/>
        <end position="243"/>
    </location>
    <ligand>
        <name>NAD(+)</name>
        <dbReference type="ChEBI" id="CHEBI:57540"/>
    </ligand>
</feature>
<feature type="binding site" evidence="1">
    <location>
        <begin position="263"/>
        <end position="267"/>
    </location>
    <ligand>
        <name>NAD(+)</name>
        <dbReference type="ChEBI" id="CHEBI:57540"/>
    </ligand>
</feature>
<feature type="binding site" evidence="1">
    <location>
        <begin position="273"/>
        <end position="274"/>
    </location>
    <ligand>
        <name>NAD(+)</name>
        <dbReference type="ChEBI" id="CHEBI:57540"/>
    </ligand>
</feature>
<feature type="binding site" evidence="1">
    <location>
        <position position="322"/>
    </location>
    <ligand>
        <name>NAD(+)</name>
        <dbReference type="ChEBI" id="CHEBI:57540"/>
    </ligand>
</feature>
<feature type="binding site" evidence="1">
    <location>
        <position position="492"/>
    </location>
    <ligand>
        <name>NAD(+)</name>
        <dbReference type="ChEBI" id="CHEBI:57540"/>
    </ligand>
</feature>
<organism>
    <name type="scientific">Salmonella paratyphi C (strain RKS4594)</name>
    <dbReference type="NCBI Taxonomy" id="476213"/>
    <lineage>
        <taxon>Bacteria</taxon>
        <taxon>Pseudomonadati</taxon>
        <taxon>Pseudomonadota</taxon>
        <taxon>Gammaproteobacteria</taxon>
        <taxon>Enterobacterales</taxon>
        <taxon>Enterobacteriaceae</taxon>
        <taxon>Salmonella</taxon>
    </lineage>
</organism>
<protein>
    <recommendedName>
        <fullName evidence="1">Urocanate hydratase</fullName>
        <shortName evidence="1">Urocanase</shortName>
        <ecNumber evidence="1">4.2.1.49</ecNumber>
    </recommendedName>
    <alternativeName>
        <fullName evidence="1">Imidazolonepropionate hydrolase</fullName>
    </alternativeName>
</protein>
<accession>C0PWX8</accession>
<proteinExistence type="inferred from homology"/>
<keyword id="KW-0963">Cytoplasm</keyword>
<keyword id="KW-0369">Histidine metabolism</keyword>
<keyword id="KW-0456">Lyase</keyword>
<keyword id="KW-0520">NAD</keyword>
<reference key="1">
    <citation type="journal article" date="2009" name="PLoS ONE">
        <title>Salmonella paratyphi C: genetic divergence from Salmonella choleraesuis and pathogenic convergence with Salmonella typhi.</title>
        <authorList>
            <person name="Liu W.-Q."/>
            <person name="Feng Y."/>
            <person name="Wang Y."/>
            <person name="Zou Q.-H."/>
            <person name="Chen F."/>
            <person name="Guo J.-T."/>
            <person name="Peng Y.-H."/>
            <person name="Jin Y."/>
            <person name="Li Y.-G."/>
            <person name="Hu S.-N."/>
            <person name="Johnston R.N."/>
            <person name="Liu G.-R."/>
            <person name="Liu S.-L."/>
        </authorList>
    </citation>
    <scope>NUCLEOTIDE SEQUENCE [LARGE SCALE GENOMIC DNA]</scope>
    <source>
        <strain>RKS4594</strain>
    </source>
</reference>
<name>HUTU_SALPC</name>
<dbReference type="EC" id="4.2.1.49" evidence="1"/>
<dbReference type="EMBL" id="CP000857">
    <property type="protein sequence ID" value="ACN44960.1"/>
    <property type="molecule type" value="Genomic_DNA"/>
</dbReference>
<dbReference type="RefSeq" id="WP_001115209.1">
    <property type="nucleotide sequence ID" value="NC_012125.1"/>
</dbReference>
<dbReference type="SMR" id="C0PWX8"/>
<dbReference type="KEGG" id="sei:SPC_0786"/>
<dbReference type="HOGENOM" id="CLU_018868_0_1_6"/>
<dbReference type="UniPathway" id="UPA00379">
    <property type="reaction ID" value="UER00550"/>
</dbReference>
<dbReference type="Proteomes" id="UP000001599">
    <property type="component" value="Chromosome"/>
</dbReference>
<dbReference type="GO" id="GO:0005737">
    <property type="term" value="C:cytoplasm"/>
    <property type="evidence" value="ECO:0007669"/>
    <property type="project" value="UniProtKB-SubCell"/>
</dbReference>
<dbReference type="GO" id="GO:0016153">
    <property type="term" value="F:urocanate hydratase activity"/>
    <property type="evidence" value="ECO:0007669"/>
    <property type="project" value="UniProtKB-UniRule"/>
</dbReference>
<dbReference type="GO" id="GO:0019556">
    <property type="term" value="P:L-histidine catabolic process to glutamate and formamide"/>
    <property type="evidence" value="ECO:0007669"/>
    <property type="project" value="UniProtKB-UniPathway"/>
</dbReference>
<dbReference type="GO" id="GO:0019557">
    <property type="term" value="P:L-histidine catabolic process to glutamate and formate"/>
    <property type="evidence" value="ECO:0007669"/>
    <property type="project" value="UniProtKB-UniPathway"/>
</dbReference>
<dbReference type="FunFam" id="3.40.50.10730:FF:000001">
    <property type="entry name" value="Urocanate hydratase"/>
    <property type="match status" value="1"/>
</dbReference>
<dbReference type="Gene3D" id="3.40.50.10730">
    <property type="entry name" value="Urocanase like domains"/>
    <property type="match status" value="1"/>
</dbReference>
<dbReference type="Gene3D" id="3.40.1770.10">
    <property type="entry name" value="Urocanase superfamily"/>
    <property type="match status" value="1"/>
</dbReference>
<dbReference type="HAMAP" id="MF_00577">
    <property type="entry name" value="HutU"/>
    <property type="match status" value="1"/>
</dbReference>
<dbReference type="InterPro" id="IPR055351">
    <property type="entry name" value="Urocanase"/>
</dbReference>
<dbReference type="InterPro" id="IPR023637">
    <property type="entry name" value="Urocanase-like"/>
</dbReference>
<dbReference type="InterPro" id="IPR035401">
    <property type="entry name" value="Urocanase_C"/>
</dbReference>
<dbReference type="InterPro" id="IPR038364">
    <property type="entry name" value="Urocanase_central_sf"/>
</dbReference>
<dbReference type="InterPro" id="IPR023636">
    <property type="entry name" value="Urocanase_CS"/>
</dbReference>
<dbReference type="InterPro" id="IPR035400">
    <property type="entry name" value="Urocanase_N"/>
</dbReference>
<dbReference type="InterPro" id="IPR035085">
    <property type="entry name" value="Urocanase_Rossmann-like"/>
</dbReference>
<dbReference type="InterPro" id="IPR036190">
    <property type="entry name" value="Urocanase_sf"/>
</dbReference>
<dbReference type="NCBIfam" id="TIGR01228">
    <property type="entry name" value="hutU"/>
    <property type="match status" value="1"/>
</dbReference>
<dbReference type="NCBIfam" id="NF003820">
    <property type="entry name" value="PRK05414.1"/>
    <property type="match status" value="1"/>
</dbReference>
<dbReference type="PANTHER" id="PTHR12216">
    <property type="entry name" value="UROCANATE HYDRATASE"/>
    <property type="match status" value="1"/>
</dbReference>
<dbReference type="PANTHER" id="PTHR12216:SF4">
    <property type="entry name" value="UROCANATE HYDRATASE"/>
    <property type="match status" value="1"/>
</dbReference>
<dbReference type="Pfam" id="PF01175">
    <property type="entry name" value="Urocanase"/>
    <property type="match status" value="1"/>
</dbReference>
<dbReference type="Pfam" id="PF17392">
    <property type="entry name" value="Urocanase_C"/>
    <property type="match status" value="1"/>
</dbReference>
<dbReference type="Pfam" id="PF17391">
    <property type="entry name" value="Urocanase_N"/>
    <property type="match status" value="1"/>
</dbReference>
<dbReference type="PIRSF" id="PIRSF001423">
    <property type="entry name" value="Urocanate_hydrat"/>
    <property type="match status" value="1"/>
</dbReference>
<dbReference type="SUPFAM" id="SSF111326">
    <property type="entry name" value="Urocanase"/>
    <property type="match status" value="1"/>
</dbReference>
<dbReference type="PROSITE" id="PS01233">
    <property type="entry name" value="UROCANASE"/>
    <property type="match status" value="1"/>
</dbReference>
<gene>
    <name evidence="1" type="primary">hutU</name>
    <name type="ordered locus">SPC_0786</name>
</gene>
<sequence>MPESKYRQQTIRAPRGTVLTAKSWLTEAPLRMLMNNLDPDVAENPHELVVYGGIGRAARNWECYDAIVDALTRLEADETLLIQSGKPVGVFKTHDNAPRVLIANSNLVPHWATWEHFNELDAKGLAMYGQMTAGSWIYIGSQGIVQGTYETFVEAGRQHYNGTLAGRWVLTAGLGGMGGAQPLAATLAGACSLTIECQQSRIDFRLRTRYVDEQAATLDDALARITRYTREGKAVSVALCANAADILPELVNRGVRPDLVTDQTSAHDPLHGYLPSGWRWEEYQKNAQSDPHGTMQAAKRSMAAHVRAMLAFSKMGVPTFDYGNNIRQMAKEMGVENAFDFPGFVPAYIRPLFCRGIGPFRWVALSGDPQDIYKTDAKVKEIVAEDKHLHHWLDMARERIHFQGLPARICWVGLEWRQKLGLAFNEMVRCGEVSAPIVIGRDHLDSGSVASPNRETEAMRDGSDAVSDWPLLNALLNTASGATWVSLHHGGGVGMGFSQHAGMVIVCDGTDEAAARIRRVLHNDPATGVMRHADAGYDLAVECAVEQGLNLPMVAATQGKG</sequence>
<evidence type="ECO:0000255" key="1">
    <source>
        <dbReference type="HAMAP-Rule" id="MF_00577"/>
    </source>
</evidence>
<comment type="function">
    <text evidence="1">Catalyzes the conversion of urocanate to 4-imidazolone-5-propionate.</text>
</comment>
<comment type="catalytic activity">
    <reaction evidence="1">
        <text>4-imidazolone-5-propanoate = trans-urocanate + H2O</text>
        <dbReference type="Rhea" id="RHEA:13101"/>
        <dbReference type="ChEBI" id="CHEBI:15377"/>
        <dbReference type="ChEBI" id="CHEBI:17771"/>
        <dbReference type="ChEBI" id="CHEBI:77893"/>
        <dbReference type="EC" id="4.2.1.49"/>
    </reaction>
</comment>
<comment type="cofactor">
    <cofactor evidence="1">
        <name>NAD(+)</name>
        <dbReference type="ChEBI" id="CHEBI:57540"/>
    </cofactor>
    <text evidence="1">Binds 1 NAD(+) per subunit.</text>
</comment>
<comment type="pathway">
    <text evidence="1">Amino-acid degradation; L-histidine degradation into L-glutamate; N-formimidoyl-L-glutamate from L-histidine: step 2/3.</text>
</comment>
<comment type="subcellular location">
    <subcellularLocation>
        <location evidence="1">Cytoplasm</location>
    </subcellularLocation>
</comment>
<comment type="similarity">
    <text evidence="1">Belongs to the urocanase family.</text>
</comment>